<keyword id="KW-0106">Calcium</keyword>
<keyword id="KW-0175">Coiled coil</keyword>
<keyword id="KW-0176">Collagen</keyword>
<keyword id="KW-1015">Disulfide bond</keyword>
<keyword id="KW-0272">Extracellular matrix</keyword>
<keyword id="KW-0305">Gaseous exchange</keyword>
<keyword id="KW-0325">Glycoprotein</keyword>
<keyword id="KW-0379">Hydroxylation</keyword>
<keyword id="KW-0391">Immunity</keyword>
<keyword id="KW-0399">Innate immunity</keyword>
<keyword id="KW-0430">Lectin</keyword>
<keyword id="KW-1185">Reference proteome</keyword>
<keyword id="KW-0677">Repeat</keyword>
<keyword id="KW-0702">S-nitrosylation</keyword>
<keyword id="KW-0964">Secreted</keyword>
<keyword id="KW-0732">Signal</keyword>
<keyword id="KW-0767">Surface film</keyword>
<feature type="signal peptide" evidence="3">
    <location>
        <begin position="1"/>
        <end position="21"/>
    </location>
</feature>
<feature type="chain" id="PRO_0000269560" description="Pulmonary surfactant-associated protein D">
    <location>
        <begin position="22"/>
        <end position="375"/>
    </location>
</feature>
<feature type="domain" description="Collagen-like">
    <location>
        <begin position="46"/>
        <end position="222"/>
    </location>
</feature>
<feature type="domain" description="C-type lectin" evidence="4">
    <location>
        <begin position="260"/>
        <end position="374"/>
    </location>
</feature>
<feature type="region of interest" description="Disordered" evidence="5">
    <location>
        <begin position="43"/>
        <end position="221"/>
    </location>
</feature>
<feature type="coiled-coil region" evidence="3">
    <location>
        <begin position="223"/>
        <end position="251"/>
    </location>
</feature>
<feature type="compositionally biased region" description="Basic and acidic residues" evidence="5">
    <location>
        <begin position="50"/>
        <end position="65"/>
    </location>
</feature>
<feature type="compositionally biased region" description="Pro residues" evidence="5">
    <location>
        <begin position="105"/>
        <end position="114"/>
    </location>
</feature>
<feature type="compositionally biased region" description="Low complexity" evidence="5">
    <location>
        <begin position="116"/>
        <end position="132"/>
    </location>
</feature>
<feature type="compositionally biased region" description="Low complexity" evidence="5">
    <location>
        <begin position="138"/>
        <end position="150"/>
    </location>
</feature>
<feature type="compositionally biased region" description="Low complexity" evidence="5">
    <location>
        <begin position="173"/>
        <end position="189"/>
    </location>
</feature>
<feature type="compositionally biased region" description="Basic and acidic residues" evidence="5">
    <location>
        <begin position="204"/>
        <end position="216"/>
    </location>
</feature>
<feature type="modified residue" description="S-nitrosocysteine" evidence="2">
    <location>
        <position position="35"/>
    </location>
</feature>
<feature type="modified residue" description="S-nitrosocysteine" evidence="2">
    <location>
        <position position="40"/>
    </location>
</feature>
<feature type="modified residue" description="4-hydroxyproline" evidence="1">
    <location>
        <position position="78"/>
    </location>
</feature>
<feature type="modified residue" description="5-hydroxylysine" evidence="1">
    <location>
        <position position="87"/>
    </location>
</feature>
<feature type="modified residue" description="4-hydroxyproline" evidence="1">
    <location>
        <position position="96"/>
    </location>
</feature>
<feature type="modified residue" description="5-hydroxylysine" evidence="1">
    <location>
        <position position="99"/>
    </location>
</feature>
<feature type="modified residue" description="4-hydroxyproline" evidence="1">
    <location>
        <position position="171"/>
    </location>
</feature>
<feature type="modified residue" description="4-hydroxyproline" evidence="1">
    <location>
        <position position="177"/>
    </location>
</feature>
<feature type="glycosylation site" description="N-linked (GlcNAc...) asparagine" evidence="3">
    <location>
        <position position="90"/>
    </location>
</feature>
<feature type="disulfide bond" evidence="4">
    <location>
        <begin position="281"/>
        <end position="373"/>
    </location>
</feature>
<feature type="disulfide bond" evidence="4">
    <location>
        <begin position="351"/>
        <end position="365"/>
    </location>
</feature>
<proteinExistence type="evidence at transcript level"/>
<dbReference type="EMBL" id="DQ457096">
    <property type="protein sequence ID" value="ABE68875.1"/>
    <property type="molecule type" value="mRNA"/>
</dbReference>
<dbReference type="RefSeq" id="NP_001035283.1">
    <property type="nucleotide sequence ID" value="NM_001040193.1"/>
</dbReference>
<dbReference type="RefSeq" id="XP_015002617.1">
    <property type="nucleotide sequence ID" value="XM_015147131.2"/>
</dbReference>
<dbReference type="SMR" id="Q1PBC5"/>
<dbReference type="FunCoup" id="Q1PBC5">
    <property type="interactions" value="154"/>
</dbReference>
<dbReference type="STRING" id="9544.ENSMMUP00000003737"/>
<dbReference type="GlyCosmos" id="Q1PBC5">
    <property type="glycosylation" value="1 site, No reported glycans"/>
</dbReference>
<dbReference type="PaxDb" id="9544-ENSMMUP00000003737"/>
<dbReference type="Ensembl" id="ENSMMUT00000003955.4">
    <property type="protein sequence ID" value="ENSMMUP00000003737.2"/>
    <property type="gene ID" value="ENSMMUG00000002787.4"/>
</dbReference>
<dbReference type="GeneID" id="678657"/>
<dbReference type="KEGG" id="mcc:678657"/>
<dbReference type="CTD" id="6441"/>
<dbReference type="VEuPathDB" id="HostDB:ENSMMUG00000002787"/>
<dbReference type="VGNC" id="VGNC:77190">
    <property type="gene designation" value="SFTPD"/>
</dbReference>
<dbReference type="eggNOG" id="KOG4297">
    <property type="taxonomic scope" value="Eukaryota"/>
</dbReference>
<dbReference type="GeneTree" id="ENSGT00940000155748"/>
<dbReference type="HOGENOM" id="CLU_049894_3_0_1"/>
<dbReference type="InParanoid" id="Q1PBC5"/>
<dbReference type="OMA" id="YQKVATF"/>
<dbReference type="OrthoDB" id="10255512at2759"/>
<dbReference type="TreeFam" id="TF330481"/>
<dbReference type="Proteomes" id="UP000006718">
    <property type="component" value="Chromosome 9"/>
</dbReference>
<dbReference type="Bgee" id="ENSMMUG00000002787">
    <property type="expression patterns" value="Expressed in lung and 2 other cell types or tissues"/>
</dbReference>
<dbReference type="ExpressionAtlas" id="Q1PBC5">
    <property type="expression patterns" value="baseline"/>
</dbReference>
<dbReference type="GO" id="GO:0005581">
    <property type="term" value="C:collagen trimer"/>
    <property type="evidence" value="ECO:0007669"/>
    <property type="project" value="UniProtKB-KW"/>
</dbReference>
<dbReference type="GO" id="GO:0005615">
    <property type="term" value="C:extracellular space"/>
    <property type="evidence" value="ECO:0000318"/>
    <property type="project" value="GO_Central"/>
</dbReference>
<dbReference type="GO" id="GO:0005771">
    <property type="term" value="C:multivesicular body"/>
    <property type="evidence" value="ECO:0000318"/>
    <property type="project" value="GO_Central"/>
</dbReference>
<dbReference type="GO" id="GO:0030246">
    <property type="term" value="F:carbohydrate binding"/>
    <property type="evidence" value="ECO:0007669"/>
    <property type="project" value="UniProtKB-KW"/>
</dbReference>
<dbReference type="GO" id="GO:0045087">
    <property type="term" value="P:innate immune response"/>
    <property type="evidence" value="ECO:0007669"/>
    <property type="project" value="UniProtKB-KW"/>
</dbReference>
<dbReference type="GO" id="GO:0048286">
    <property type="term" value="P:lung alveolus development"/>
    <property type="evidence" value="ECO:0007669"/>
    <property type="project" value="Ensembl"/>
</dbReference>
<dbReference type="GO" id="GO:0050766">
    <property type="term" value="P:positive regulation of phagocytosis"/>
    <property type="evidence" value="ECO:0000318"/>
    <property type="project" value="GO_Central"/>
</dbReference>
<dbReference type="GO" id="GO:0002682">
    <property type="term" value="P:regulation of immune system process"/>
    <property type="evidence" value="ECO:0007669"/>
    <property type="project" value="UniProtKB-ARBA"/>
</dbReference>
<dbReference type="GO" id="GO:0007585">
    <property type="term" value="P:respiratory gaseous exchange by respiratory system"/>
    <property type="evidence" value="ECO:0007669"/>
    <property type="project" value="UniProtKB-KW"/>
</dbReference>
<dbReference type="GO" id="GO:0043129">
    <property type="term" value="P:surfactant homeostasis"/>
    <property type="evidence" value="ECO:0000318"/>
    <property type="project" value="GO_Central"/>
</dbReference>
<dbReference type="CDD" id="cd03591">
    <property type="entry name" value="CLECT_collectin_like"/>
    <property type="match status" value="1"/>
</dbReference>
<dbReference type="FunFam" id="1.20.5.360:FF:000001">
    <property type="entry name" value="Pulmonary surfactant-associated protein D"/>
    <property type="match status" value="1"/>
</dbReference>
<dbReference type="FunFam" id="3.10.100.10:FF:000045">
    <property type="entry name" value="Pulmonary surfactant-associated protein D"/>
    <property type="match status" value="1"/>
</dbReference>
<dbReference type="Gene3D" id="3.10.100.10">
    <property type="entry name" value="Mannose-Binding Protein A, subunit A"/>
    <property type="match status" value="1"/>
</dbReference>
<dbReference type="Gene3D" id="1.20.5.360">
    <property type="entry name" value="SFTPD helical domain"/>
    <property type="match status" value="1"/>
</dbReference>
<dbReference type="InterPro" id="IPR001304">
    <property type="entry name" value="C-type_lectin-like"/>
</dbReference>
<dbReference type="InterPro" id="IPR016186">
    <property type="entry name" value="C-type_lectin-like/link_sf"/>
</dbReference>
<dbReference type="InterPro" id="IPR018378">
    <property type="entry name" value="C-type_lectin_CS"/>
</dbReference>
<dbReference type="InterPro" id="IPR051077">
    <property type="entry name" value="Ca-dependent_lectin"/>
</dbReference>
<dbReference type="InterPro" id="IPR008160">
    <property type="entry name" value="Collagen"/>
</dbReference>
<dbReference type="InterPro" id="IPR033990">
    <property type="entry name" value="Collectin_CTLD"/>
</dbReference>
<dbReference type="InterPro" id="IPR016187">
    <property type="entry name" value="CTDL_fold"/>
</dbReference>
<dbReference type="InterPro" id="IPR015097">
    <property type="entry name" value="Surfac_D-trimer"/>
</dbReference>
<dbReference type="PANTHER" id="PTHR24024">
    <property type="entry name" value="PULMONARY SURFACTANT-ASSOCIATED PROTEIN A"/>
    <property type="match status" value="1"/>
</dbReference>
<dbReference type="PANTHER" id="PTHR24024:SF15">
    <property type="entry name" value="PULMONARY SURFACTANT-ASSOCIATED PROTEIN D"/>
    <property type="match status" value="1"/>
</dbReference>
<dbReference type="Pfam" id="PF01391">
    <property type="entry name" value="Collagen"/>
    <property type="match status" value="2"/>
</dbReference>
<dbReference type="Pfam" id="PF00059">
    <property type="entry name" value="Lectin_C"/>
    <property type="match status" value="1"/>
</dbReference>
<dbReference type="Pfam" id="PF09006">
    <property type="entry name" value="Surfac_D-trimer"/>
    <property type="match status" value="1"/>
</dbReference>
<dbReference type="SMART" id="SM00034">
    <property type="entry name" value="CLECT"/>
    <property type="match status" value="1"/>
</dbReference>
<dbReference type="SUPFAM" id="SSF56436">
    <property type="entry name" value="C-type lectin-like"/>
    <property type="match status" value="1"/>
</dbReference>
<dbReference type="SUPFAM" id="SSF57944">
    <property type="entry name" value="Triple coiled coil domain of C-type lectins"/>
    <property type="match status" value="1"/>
</dbReference>
<dbReference type="PROSITE" id="PS00615">
    <property type="entry name" value="C_TYPE_LECTIN_1"/>
    <property type="match status" value="1"/>
</dbReference>
<dbReference type="PROSITE" id="PS50041">
    <property type="entry name" value="C_TYPE_LECTIN_2"/>
    <property type="match status" value="1"/>
</dbReference>
<accession>Q1PBC5</accession>
<name>SFTPD_MACMU</name>
<sequence>MLLFLLSALVLLTQSLGYLEADMKTYSQRTAPSACTLVMCSSVESGLPGRDGRDGREGPRGEKGDPGLPGAAGKAGMPGEAGPVGPKGDNGSIGEPGPKGDTGPSGPPGPPGVPGPAGREGPLGKQGNIGPQGKPGPKGEAGPKGEVGAPGMQGSAGARGPAGPKGDRGVPGERGAPGNAGAAGSAGVMGPQGSPGARGPPGLKGDKGVPGDKGAKGESGLPDVASLRQQVEALQKQVQHLQAAFSQYKKVELFPNGQSVGEKIFKTAGFVKPFTEAQLVCTQAGGQLASPRSAAENAALQQLVIAQNEAAFLSMTDSKMEGKFTYPTGESLVYSNWAPGEPNDDGGSEDCVEIFTNGKWNDRACGEKRLVVCEF</sequence>
<reference key="1">
    <citation type="journal article" date="2006" name="Clin. Vaccine Immunol.">
        <title>Macaque multimeric soluble CD40 ligand and GITR ligand constructs are immunostimulatory molecules in vitro.</title>
        <authorList>
            <person name="Stone G.W."/>
            <person name="Barzee S."/>
            <person name="Snarsky V."/>
            <person name="Spina C.A."/>
            <person name="Lifson J.D."/>
            <person name="Pillai V.K."/>
            <person name="Amara R.R."/>
            <person name="Villinger F."/>
            <person name="Kornbluth R.S."/>
        </authorList>
    </citation>
    <scope>NUCLEOTIDE SEQUENCE [MRNA]</scope>
    <source>
        <tissue>Lung</tissue>
    </source>
</reference>
<comment type="function">
    <text evidence="1">Contributes to the lung's defense against inhaled microorganisms, organic antigens and toxins. Interacts with compounds such as bacterial lipopolysaccharides, oligosaccharides and fatty acids and modulates leukocyte action in immune response. May participate in the extracellular reorganization or turnover of pulmonary surfactant. Binds strongly maltose residues and to a lesser extent other alpha-glucosyl moieties (By similarity).</text>
</comment>
<comment type="subunit">
    <text evidence="1">Oligomeric complex of 4 set of homotrimers.</text>
</comment>
<comment type="subcellular location">
    <subcellularLocation>
        <location evidence="1">Secreted</location>
        <location evidence="1">Extracellular space</location>
        <location evidence="1">Extracellular matrix</location>
    </subcellularLocation>
    <subcellularLocation>
        <location evidence="1">Secreted</location>
        <location evidence="1">Extracellular space</location>
        <location evidence="1">Surface film</location>
    </subcellularLocation>
</comment>
<comment type="PTM">
    <text evidence="1">Hydroxylation on proline residues within the sequence motif, GXPG, is most likely to be 4-hydroxy as this fits the requirement for 4-hydroxylation in vertebrates.</text>
</comment>
<comment type="PTM">
    <text evidence="1">S-nitrosylation at Cys-35 and Cys-40 alters the quaternary structure which results in a pro-inflammatory chemoattractive signaling activity with macrophages.</text>
</comment>
<comment type="miscellaneous">
    <text>Pulmonary surfactant consists of 90% lipid and 10% protein. There are 4 surfactant-associated proteins: 2 collagenous, carbohydrate-binding glycoproteins (SP-A and SP-D) and 2 small hydrophobic proteins (SP-B and SP-C).</text>
</comment>
<comment type="similarity">
    <text evidence="6">Belongs to the SFTPD family.</text>
</comment>
<protein>
    <recommendedName>
        <fullName>Pulmonary surfactant-associated protein D</fullName>
        <shortName>PSP-D</shortName>
        <shortName>SP-D</shortName>
    </recommendedName>
    <alternativeName>
        <fullName>Lung surfactant protein D</fullName>
    </alternativeName>
</protein>
<evidence type="ECO:0000250" key="1"/>
<evidence type="ECO:0000250" key="2">
    <source>
        <dbReference type="UniProtKB" id="P35248"/>
    </source>
</evidence>
<evidence type="ECO:0000255" key="3"/>
<evidence type="ECO:0000255" key="4">
    <source>
        <dbReference type="PROSITE-ProRule" id="PRU00040"/>
    </source>
</evidence>
<evidence type="ECO:0000256" key="5">
    <source>
        <dbReference type="SAM" id="MobiDB-lite"/>
    </source>
</evidence>
<evidence type="ECO:0000305" key="6"/>
<gene>
    <name type="primary">SFTPD</name>
</gene>
<organism>
    <name type="scientific">Macaca mulatta</name>
    <name type="common">Rhesus macaque</name>
    <dbReference type="NCBI Taxonomy" id="9544"/>
    <lineage>
        <taxon>Eukaryota</taxon>
        <taxon>Metazoa</taxon>
        <taxon>Chordata</taxon>
        <taxon>Craniata</taxon>
        <taxon>Vertebrata</taxon>
        <taxon>Euteleostomi</taxon>
        <taxon>Mammalia</taxon>
        <taxon>Eutheria</taxon>
        <taxon>Euarchontoglires</taxon>
        <taxon>Primates</taxon>
        <taxon>Haplorrhini</taxon>
        <taxon>Catarrhini</taxon>
        <taxon>Cercopithecidae</taxon>
        <taxon>Cercopithecinae</taxon>
        <taxon>Macaca</taxon>
    </lineage>
</organism>